<name>ILVD_ESCF3</name>
<evidence type="ECO:0000255" key="1">
    <source>
        <dbReference type="HAMAP-Rule" id="MF_00012"/>
    </source>
</evidence>
<keyword id="KW-0001">2Fe-2S</keyword>
<keyword id="KW-0028">Amino-acid biosynthesis</keyword>
<keyword id="KW-0100">Branched-chain amino acid biosynthesis</keyword>
<keyword id="KW-0408">Iron</keyword>
<keyword id="KW-0411">Iron-sulfur</keyword>
<keyword id="KW-0456">Lyase</keyword>
<keyword id="KW-0460">Magnesium</keyword>
<keyword id="KW-0479">Metal-binding</keyword>
<protein>
    <recommendedName>
        <fullName evidence="1">Dihydroxy-acid dehydratase</fullName>
        <shortName evidence="1">DAD</shortName>
        <ecNumber evidence="1">4.2.1.9</ecNumber>
    </recommendedName>
</protein>
<proteinExistence type="inferred from homology"/>
<accession>B7LU82</accession>
<dbReference type="EC" id="4.2.1.9" evidence="1"/>
<dbReference type="EMBL" id="CU928158">
    <property type="protein sequence ID" value="CAQ91191.1"/>
    <property type="molecule type" value="Genomic_DNA"/>
</dbReference>
<dbReference type="RefSeq" id="WP_001127376.1">
    <property type="nucleotide sequence ID" value="NC_011740.1"/>
</dbReference>
<dbReference type="SMR" id="B7LU82"/>
<dbReference type="GeneID" id="75059662"/>
<dbReference type="KEGG" id="efe:EFER_3731"/>
<dbReference type="HOGENOM" id="CLU_014271_4_2_6"/>
<dbReference type="OrthoDB" id="9807077at2"/>
<dbReference type="UniPathway" id="UPA00047">
    <property type="reaction ID" value="UER00057"/>
</dbReference>
<dbReference type="UniPathway" id="UPA00049">
    <property type="reaction ID" value="UER00061"/>
</dbReference>
<dbReference type="Proteomes" id="UP000000745">
    <property type="component" value="Chromosome"/>
</dbReference>
<dbReference type="GO" id="GO:0005829">
    <property type="term" value="C:cytosol"/>
    <property type="evidence" value="ECO:0007669"/>
    <property type="project" value="TreeGrafter"/>
</dbReference>
<dbReference type="GO" id="GO:0051537">
    <property type="term" value="F:2 iron, 2 sulfur cluster binding"/>
    <property type="evidence" value="ECO:0007669"/>
    <property type="project" value="UniProtKB-UniRule"/>
</dbReference>
<dbReference type="GO" id="GO:0004160">
    <property type="term" value="F:dihydroxy-acid dehydratase activity"/>
    <property type="evidence" value="ECO:0007669"/>
    <property type="project" value="UniProtKB-UniRule"/>
</dbReference>
<dbReference type="GO" id="GO:0000287">
    <property type="term" value="F:magnesium ion binding"/>
    <property type="evidence" value="ECO:0007669"/>
    <property type="project" value="UniProtKB-UniRule"/>
</dbReference>
<dbReference type="GO" id="GO:0009097">
    <property type="term" value="P:isoleucine biosynthetic process"/>
    <property type="evidence" value="ECO:0007669"/>
    <property type="project" value="UniProtKB-UniRule"/>
</dbReference>
<dbReference type="GO" id="GO:0009099">
    <property type="term" value="P:L-valine biosynthetic process"/>
    <property type="evidence" value="ECO:0007669"/>
    <property type="project" value="UniProtKB-UniRule"/>
</dbReference>
<dbReference type="FunFam" id="3.50.30.80:FF:000001">
    <property type="entry name" value="Dihydroxy-acid dehydratase"/>
    <property type="match status" value="1"/>
</dbReference>
<dbReference type="Gene3D" id="3.50.30.80">
    <property type="entry name" value="IlvD/EDD C-terminal domain-like"/>
    <property type="match status" value="1"/>
</dbReference>
<dbReference type="HAMAP" id="MF_00012">
    <property type="entry name" value="IlvD"/>
    <property type="match status" value="1"/>
</dbReference>
<dbReference type="InterPro" id="IPR042096">
    <property type="entry name" value="Dihydro-acid_dehy_C"/>
</dbReference>
<dbReference type="InterPro" id="IPR004404">
    <property type="entry name" value="DihydroxyA_deHydtase"/>
</dbReference>
<dbReference type="InterPro" id="IPR020558">
    <property type="entry name" value="DiOHA_6PGluconate_deHydtase_CS"/>
</dbReference>
<dbReference type="InterPro" id="IPR056740">
    <property type="entry name" value="ILV_EDD_C"/>
</dbReference>
<dbReference type="InterPro" id="IPR000581">
    <property type="entry name" value="ILV_EDD_N"/>
</dbReference>
<dbReference type="InterPro" id="IPR037237">
    <property type="entry name" value="IlvD/EDD_N"/>
</dbReference>
<dbReference type="NCBIfam" id="TIGR00110">
    <property type="entry name" value="ilvD"/>
    <property type="match status" value="1"/>
</dbReference>
<dbReference type="NCBIfam" id="NF009103">
    <property type="entry name" value="PRK12448.1"/>
    <property type="match status" value="1"/>
</dbReference>
<dbReference type="PANTHER" id="PTHR43661">
    <property type="entry name" value="D-XYLONATE DEHYDRATASE"/>
    <property type="match status" value="1"/>
</dbReference>
<dbReference type="PANTHER" id="PTHR43661:SF3">
    <property type="entry name" value="D-XYLONATE DEHYDRATASE YAGF-RELATED"/>
    <property type="match status" value="1"/>
</dbReference>
<dbReference type="Pfam" id="PF24877">
    <property type="entry name" value="ILV_EDD_C"/>
    <property type="match status" value="1"/>
</dbReference>
<dbReference type="Pfam" id="PF00920">
    <property type="entry name" value="ILVD_EDD_N"/>
    <property type="match status" value="1"/>
</dbReference>
<dbReference type="SUPFAM" id="SSF143975">
    <property type="entry name" value="IlvD/EDD N-terminal domain-like"/>
    <property type="match status" value="1"/>
</dbReference>
<dbReference type="SUPFAM" id="SSF52016">
    <property type="entry name" value="LeuD/IlvD-like"/>
    <property type="match status" value="1"/>
</dbReference>
<dbReference type="PROSITE" id="PS00886">
    <property type="entry name" value="ILVD_EDD_1"/>
    <property type="match status" value="1"/>
</dbReference>
<dbReference type="PROSITE" id="PS00887">
    <property type="entry name" value="ILVD_EDD_2"/>
    <property type="match status" value="1"/>
</dbReference>
<organism>
    <name type="scientific">Escherichia fergusonii (strain ATCC 35469 / DSM 13698 / CCUG 18766 / IAM 14443 / JCM 21226 / LMG 7866 / NBRC 102419 / NCTC 12128 / CDC 0568-73)</name>
    <dbReference type="NCBI Taxonomy" id="585054"/>
    <lineage>
        <taxon>Bacteria</taxon>
        <taxon>Pseudomonadati</taxon>
        <taxon>Pseudomonadota</taxon>
        <taxon>Gammaproteobacteria</taxon>
        <taxon>Enterobacterales</taxon>
        <taxon>Enterobacteriaceae</taxon>
        <taxon>Escherichia</taxon>
    </lineage>
</organism>
<reference key="1">
    <citation type="journal article" date="2009" name="PLoS Genet.">
        <title>Organised genome dynamics in the Escherichia coli species results in highly diverse adaptive paths.</title>
        <authorList>
            <person name="Touchon M."/>
            <person name="Hoede C."/>
            <person name="Tenaillon O."/>
            <person name="Barbe V."/>
            <person name="Baeriswyl S."/>
            <person name="Bidet P."/>
            <person name="Bingen E."/>
            <person name="Bonacorsi S."/>
            <person name="Bouchier C."/>
            <person name="Bouvet O."/>
            <person name="Calteau A."/>
            <person name="Chiapello H."/>
            <person name="Clermont O."/>
            <person name="Cruveiller S."/>
            <person name="Danchin A."/>
            <person name="Diard M."/>
            <person name="Dossat C."/>
            <person name="Karoui M.E."/>
            <person name="Frapy E."/>
            <person name="Garry L."/>
            <person name="Ghigo J.M."/>
            <person name="Gilles A.M."/>
            <person name="Johnson J."/>
            <person name="Le Bouguenec C."/>
            <person name="Lescat M."/>
            <person name="Mangenot S."/>
            <person name="Martinez-Jehanne V."/>
            <person name="Matic I."/>
            <person name="Nassif X."/>
            <person name="Oztas S."/>
            <person name="Petit M.A."/>
            <person name="Pichon C."/>
            <person name="Rouy Z."/>
            <person name="Ruf C.S."/>
            <person name="Schneider D."/>
            <person name="Tourret J."/>
            <person name="Vacherie B."/>
            <person name="Vallenet D."/>
            <person name="Medigue C."/>
            <person name="Rocha E.P.C."/>
            <person name="Denamur E."/>
        </authorList>
    </citation>
    <scope>NUCLEOTIDE SEQUENCE [LARGE SCALE GENOMIC DNA]</scope>
    <source>
        <strain>ATCC 35469 / DSM 13698 / BCRC 15582 / CCUG 18766 / IAM 14443 / JCM 21226 / LMG 7866 / NBRC 102419 / NCTC 12128 / CDC 0568-73</strain>
    </source>
</reference>
<feature type="chain" id="PRO_1000116274" description="Dihydroxy-acid dehydratase">
    <location>
        <begin position="1"/>
        <end position="616"/>
    </location>
</feature>
<feature type="active site" description="Proton acceptor" evidence="1">
    <location>
        <position position="517"/>
    </location>
</feature>
<feature type="binding site" evidence="1">
    <location>
        <position position="81"/>
    </location>
    <ligand>
        <name>Mg(2+)</name>
        <dbReference type="ChEBI" id="CHEBI:18420"/>
    </ligand>
</feature>
<feature type="binding site" evidence="1">
    <location>
        <position position="122"/>
    </location>
    <ligand>
        <name>[2Fe-2S] cluster</name>
        <dbReference type="ChEBI" id="CHEBI:190135"/>
    </ligand>
</feature>
<feature type="binding site" evidence="1">
    <location>
        <position position="123"/>
    </location>
    <ligand>
        <name>Mg(2+)</name>
        <dbReference type="ChEBI" id="CHEBI:18420"/>
    </ligand>
</feature>
<feature type="binding site" description="via carbamate group" evidence="1">
    <location>
        <position position="124"/>
    </location>
    <ligand>
        <name>Mg(2+)</name>
        <dbReference type="ChEBI" id="CHEBI:18420"/>
    </ligand>
</feature>
<feature type="binding site" evidence="1">
    <location>
        <position position="195"/>
    </location>
    <ligand>
        <name>[2Fe-2S] cluster</name>
        <dbReference type="ChEBI" id="CHEBI:190135"/>
    </ligand>
</feature>
<feature type="binding site" evidence="1">
    <location>
        <position position="491"/>
    </location>
    <ligand>
        <name>Mg(2+)</name>
        <dbReference type="ChEBI" id="CHEBI:18420"/>
    </ligand>
</feature>
<feature type="modified residue" description="N6-carboxylysine" evidence="1">
    <location>
        <position position="124"/>
    </location>
</feature>
<gene>
    <name evidence="1" type="primary">ilvD</name>
    <name type="ordered locus">EFER_3731</name>
</gene>
<comment type="function">
    <text evidence="1">Functions in the biosynthesis of branched-chain amino acids. Catalyzes the dehydration of (2R,3R)-2,3-dihydroxy-3-methylpentanoate (2,3-dihydroxy-3-methylvalerate) into 2-oxo-3-methylpentanoate (2-oxo-3-methylvalerate) and of (2R)-2,3-dihydroxy-3-methylbutanoate (2,3-dihydroxyisovalerate) into 2-oxo-3-methylbutanoate (2-oxoisovalerate), the penultimate precursor to L-isoleucine and L-valine, respectively.</text>
</comment>
<comment type="catalytic activity">
    <reaction evidence="1">
        <text>(2R)-2,3-dihydroxy-3-methylbutanoate = 3-methyl-2-oxobutanoate + H2O</text>
        <dbReference type="Rhea" id="RHEA:24809"/>
        <dbReference type="ChEBI" id="CHEBI:11851"/>
        <dbReference type="ChEBI" id="CHEBI:15377"/>
        <dbReference type="ChEBI" id="CHEBI:49072"/>
        <dbReference type="EC" id="4.2.1.9"/>
    </reaction>
    <physiologicalReaction direction="left-to-right" evidence="1">
        <dbReference type="Rhea" id="RHEA:24810"/>
    </physiologicalReaction>
</comment>
<comment type="catalytic activity">
    <reaction evidence="1">
        <text>(2R,3R)-2,3-dihydroxy-3-methylpentanoate = (S)-3-methyl-2-oxopentanoate + H2O</text>
        <dbReference type="Rhea" id="RHEA:27694"/>
        <dbReference type="ChEBI" id="CHEBI:15377"/>
        <dbReference type="ChEBI" id="CHEBI:35146"/>
        <dbReference type="ChEBI" id="CHEBI:49258"/>
        <dbReference type="EC" id="4.2.1.9"/>
    </reaction>
    <physiologicalReaction direction="left-to-right" evidence="1">
        <dbReference type="Rhea" id="RHEA:27695"/>
    </physiologicalReaction>
</comment>
<comment type="cofactor">
    <cofactor evidence="1">
        <name>[2Fe-2S] cluster</name>
        <dbReference type="ChEBI" id="CHEBI:190135"/>
    </cofactor>
    <text evidence="1">Binds 1 [2Fe-2S] cluster per subunit. This cluster acts as a Lewis acid cofactor.</text>
</comment>
<comment type="cofactor">
    <cofactor evidence="1">
        <name>Mg(2+)</name>
        <dbReference type="ChEBI" id="CHEBI:18420"/>
    </cofactor>
</comment>
<comment type="pathway">
    <text evidence="1">Amino-acid biosynthesis; L-isoleucine biosynthesis; L-isoleucine from 2-oxobutanoate: step 3/4.</text>
</comment>
<comment type="pathway">
    <text evidence="1">Amino-acid biosynthesis; L-valine biosynthesis; L-valine from pyruvate: step 3/4.</text>
</comment>
<comment type="subunit">
    <text evidence="1">Homodimer.</text>
</comment>
<comment type="similarity">
    <text evidence="1">Belongs to the IlvD/Edd family.</text>
</comment>
<sequence length="616" mass="65531">MPKYRSATTTHGRNMAGARALWRATGMTDADFGKPIIAVVNSFTQFVPGHVHLRDLGKLVAEQIEAAGGVAKEFNTIAVDDGIAMGHGGMLYSLPSRELIADSVEYMVNAHCADAMVCISNCDKITPGMLMASLRLNIPVIFVSGGPMEAGKTKLSDQIIKLDLVDAMIQGADPKVSDSQSDQVERSACPTCGSCSGMFTANSMNCLTEALGLSQPGNGSLLATHADRKQLFLNAGKRIVELTKRYYEQDDESALPRNIASKAAFENAMTLDIAMGGSTNTVLHLLAAAQEAEIDFTMSDIDKLSRKVPQLCKVAPSTQKYHMEDVHRAGGVIGILGELDRAGLLNRDVKNVLGLTLPQTLEQYDIVVTQDDAVKNMFRAGPAGIRTTQAFSQDCRWDTLDDDRSNGCIRSLEHAYSKDGGLAVLYGNFAENGCIVKTAGVDDSILKFTGPAKVYESQDDAVEAILGGKVVAGDVVVIRYEGPKGGPGMQEMLYPTSFLKSMGLGKACALITDGRFSGGTSGLSIGHVSPEAASGGSIGLIEDGDLIAIDIPNRGIQLQVSDAELAARREAQEARGDKAWTPKNRERQVSFALRAYASLATSADKGAVRDKSKLGG</sequence>